<sequence length="302" mass="30260">MKVIKTLSIINFFIFVTFNIKNESKYSNTFINNAYNMSIRRSMEESKPPTGAVAGSGAGAGSGAGAVAGSGAGAVAGSGAGAVAGSGAGAVAGSGAGAVAGSGAGAVAGSGAGNGANPGADAERSPSTPATTTTTTTTNDAEASTSTSSENRNHNNAETNPKGKGEVQKPNQANKETQNNSNVQQDSQTKSNVPRTQDADTKSPTAQPEQAENSAPTAEQTESPELQSAPENKGTGQHGHMHGSRNNHPQNTSDSQKECTDGNKENCGAATSLLNNSSNIASINKFVVLISATLVLSFAIFI</sequence>
<protein>
    <recommendedName>
        <fullName evidence="3">Merozoite surface protein 2</fullName>
    </recommendedName>
    <alternativeName>
        <fullName evidence="7">Merozoite surface antigen 2</fullName>
        <shortName evidence="7">MSA-2</shortName>
    </alternativeName>
</protein>
<keyword id="KW-1003">Cell membrane</keyword>
<keyword id="KW-1015">Disulfide bond</keyword>
<keyword id="KW-0325">Glycoprotein</keyword>
<keyword id="KW-0336">GPI-anchor</keyword>
<keyword id="KW-0449">Lipoprotein</keyword>
<keyword id="KW-0461">Malaria</keyword>
<keyword id="KW-0472">Membrane</keyword>
<keyword id="KW-0477">Merozoite</keyword>
<keyword id="KW-0677">Repeat</keyword>
<keyword id="KW-0732">Signal</keyword>
<comment type="function">
    <text evidence="3">May play a role in the merozoite attachment to the erythrocyte.</text>
</comment>
<comment type="subcellular location">
    <subcellularLocation>
        <location evidence="3">Cell membrane</location>
        <topology evidence="1">Lipid-anchor</topology>
        <topology evidence="1">GPI-anchor</topology>
    </subcellularLocation>
    <text evidence="3">During host erythrocyte invasion by merozoites, carried into invaded erythrocytes where it is rapidly degraded.</text>
</comment>
<comment type="developmental stage">
    <text evidence="6">Expressed during the asexual blood stage, including in the schizont stage (at protein level).</text>
</comment>
<comment type="domain">
    <text evidence="3">The N-terminal region appears to be involved in lipid binding.</text>
</comment>
<comment type="polymorphism">
    <text evidence="6">The sequence varies across Plasmodium strains (PubMed:1990294). All variants share conserved N- and C-terminal regions; however, they belong to two allelic families, represented by 3D7 strain and FC27 strain sequences respectively, distinguished by tandem repeats and dimorphic flanking sequences within the central region of the protein (PubMed:1990294).</text>
</comment>
<gene>
    <name evidence="3" type="primary">MSP2</name>
    <name evidence="7" type="synonym">MSA2</name>
</gene>
<organism>
    <name type="scientific">Plasmodium falciparum (isolate tak 9)</name>
    <dbReference type="NCBI Taxonomy" id="57276"/>
    <lineage>
        <taxon>Eukaryota</taxon>
        <taxon>Sar</taxon>
        <taxon>Alveolata</taxon>
        <taxon>Apicomplexa</taxon>
        <taxon>Aconoidasida</taxon>
        <taxon>Haemosporida</taxon>
        <taxon>Plasmodiidae</taxon>
        <taxon>Plasmodium</taxon>
        <taxon>Plasmodium (Laverania)</taxon>
    </lineage>
</organism>
<name>MSA2_PLAF9</name>
<dbReference type="EMBL" id="X53833">
    <property type="protein sequence ID" value="CAA37830.1"/>
    <property type="molecule type" value="Genomic_DNA"/>
</dbReference>
<dbReference type="PIR" id="A39615">
    <property type="entry name" value="A39615"/>
</dbReference>
<dbReference type="GlyCosmos" id="Q03994">
    <property type="glycosylation" value="6 sites, No reported glycans"/>
</dbReference>
<dbReference type="GO" id="GO:0005886">
    <property type="term" value="C:plasma membrane"/>
    <property type="evidence" value="ECO:0007669"/>
    <property type="project" value="UniProtKB-SubCell"/>
</dbReference>
<dbReference type="GO" id="GO:0098552">
    <property type="term" value="C:side of membrane"/>
    <property type="evidence" value="ECO:0007669"/>
    <property type="project" value="UniProtKB-KW"/>
</dbReference>
<dbReference type="GO" id="GO:0007155">
    <property type="term" value="P:cell adhesion"/>
    <property type="evidence" value="ECO:0007669"/>
    <property type="project" value="InterPro"/>
</dbReference>
<dbReference type="InterPro" id="IPR001136">
    <property type="entry name" value="MSA2"/>
</dbReference>
<dbReference type="Pfam" id="PF00985">
    <property type="entry name" value="MSA_2"/>
    <property type="match status" value="1"/>
</dbReference>
<dbReference type="PIRSF" id="PIRSF003575">
    <property type="entry name" value="MSA_2"/>
    <property type="match status" value="1"/>
</dbReference>
<proteinExistence type="evidence at protein level"/>
<accession>Q03994</accession>
<feature type="signal peptide" evidence="4">
    <location>
        <begin position="1"/>
        <end position="20"/>
    </location>
</feature>
<feature type="chain" id="PRO_0000024588" description="Merozoite surface protein 2">
    <location>
        <begin position="21"/>
        <end position="276"/>
    </location>
</feature>
<feature type="propeptide" id="PRO_0000024589" description="Removed in mature form" evidence="1">
    <location>
        <begin position="277"/>
        <end position="302"/>
    </location>
</feature>
<feature type="repeat" description="1; partial" evidence="6">
    <location>
        <begin position="55"/>
        <end position="60"/>
    </location>
</feature>
<feature type="repeat" description="2" evidence="6">
    <location>
        <begin position="61"/>
        <end position="68"/>
    </location>
</feature>
<feature type="repeat" description="3" evidence="6">
    <location>
        <begin position="69"/>
        <end position="76"/>
    </location>
</feature>
<feature type="repeat" description="4" evidence="6">
    <location>
        <begin position="77"/>
        <end position="84"/>
    </location>
</feature>
<feature type="repeat" description="5" evidence="6">
    <location>
        <begin position="85"/>
        <end position="92"/>
    </location>
</feature>
<feature type="repeat" description="6" evidence="6">
    <location>
        <begin position="93"/>
        <end position="100"/>
    </location>
</feature>
<feature type="repeat" description="7" evidence="6">
    <location>
        <begin position="101"/>
        <end position="108"/>
    </location>
</feature>
<feature type="repeat" description="8; partial" evidence="6">
    <location>
        <begin position="109"/>
        <end position="113"/>
    </location>
</feature>
<feature type="region of interest" description="Polymorphic region" evidence="6">
    <location>
        <begin position="44"/>
        <end position="228"/>
    </location>
</feature>
<feature type="region of interest" description="8 X 8 AA tandem repeats of G-S-G-A-G-A-V-A" evidence="6">
    <location>
        <begin position="55"/>
        <end position="113"/>
    </location>
</feature>
<feature type="region of interest" description="Disordered" evidence="5">
    <location>
        <begin position="114"/>
        <end position="263"/>
    </location>
</feature>
<feature type="compositionally biased region" description="Low complexity" evidence="5">
    <location>
        <begin position="125"/>
        <end position="150"/>
    </location>
</feature>
<feature type="compositionally biased region" description="Basic and acidic residues" evidence="5">
    <location>
        <begin position="151"/>
        <end position="167"/>
    </location>
</feature>
<feature type="compositionally biased region" description="Polar residues" evidence="5">
    <location>
        <begin position="169"/>
        <end position="195"/>
    </location>
</feature>
<feature type="compositionally biased region" description="Polar residues" evidence="5">
    <location>
        <begin position="202"/>
        <end position="230"/>
    </location>
</feature>
<feature type="lipid moiety-binding region" description="GPI-anchor amidated asparagine" evidence="1">
    <location>
        <position position="276"/>
    </location>
</feature>
<feature type="glycosylation site" description="N-linked (GlcNAc...) asparagine" evidence="4">
    <location>
        <position position="22"/>
    </location>
</feature>
<feature type="glycosylation site" description="N-linked (GlcNAc...) asparagine" evidence="4">
    <location>
        <position position="36"/>
    </location>
</feature>
<feature type="glycosylation site" description="N-linked (GlcNAc...) asparagine" evidence="4">
    <location>
        <position position="179"/>
    </location>
</feature>
<feature type="glycosylation site" description="N-linked (GlcNAc...) asparagine" evidence="4">
    <location>
        <position position="251"/>
    </location>
</feature>
<feature type="glycosylation site" description="N-linked (GlcNAc...) asparagine" evidence="4">
    <location>
        <position position="275"/>
    </location>
</feature>
<feature type="glycosylation site" description="N-linked (GlcNAc...) asparagine" evidence="4">
    <location>
        <position position="276"/>
    </location>
</feature>
<feature type="disulfide bond" evidence="2">
    <location>
        <begin position="259"/>
        <end position="267"/>
    </location>
</feature>
<reference key="1">
    <citation type="journal article" date="1991" name="Mol. Cell. Biol.">
        <title>Structural and antigenic polymorphism of the 35- to 48-kilodalton merozoite surface antigen (MSA-2) of the malaria parasite Plasmodium falciparum.</title>
        <authorList>
            <person name="Fenton B."/>
            <person name="Clark J.T."/>
            <person name="Khan C.M.A."/>
            <person name="Robinson J.V."/>
            <person name="Walliker D."/>
            <person name="Ridley R."/>
            <person name="Scaife J.G."/>
            <person name="McBride J.S."/>
        </authorList>
    </citation>
    <scope>NUCLEOTIDE SEQUENCE [GENOMIC DNA]</scope>
    <scope>DEVELOPMENTAL STAGE</scope>
    <scope>POLYMORPHISM</scope>
    <scope>REPEATS</scope>
</reference>
<evidence type="ECO:0000250" key="1">
    <source>
        <dbReference type="UniProtKB" id="P19260"/>
    </source>
</evidence>
<evidence type="ECO:0000250" key="2">
    <source>
        <dbReference type="UniProtKB" id="P19599"/>
    </source>
</evidence>
<evidence type="ECO:0000250" key="3">
    <source>
        <dbReference type="UniProtKB" id="P50498"/>
    </source>
</evidence>
<evidence type="ECO:0000255" key="4"/>
<evidence type="ECO:0000256" key="5">
    <source>
        <dbReference type="SAM" id="MobiDB-lite"/>
    </source>
</evidence>
<evidence type="ECO:0000269" key="6">
    <source>
    </source>
</evidence>
<evidence type="ECO:0000303" key="7">
    <source>
    </source>
</evidence>